<evidence type="ECO:0000255" key="1"/>
<evidence type="ECO:0000255" key="2">
    <source>
        <dbReference type="PROSITE-ProRule" id="PRU00148"/>
    </source>
</evidence>
<evidence type="ECO:0000256" key="3">
    <source>
        <dbReference type="SAM" id="MobiDB-lite"/>
    </source>
</evidence>
<evidence type="ECO:0000269" key="4">
    <source>
    </source>
</evidence>
<evidence type="ECO:0000269" key="5">
    <source>
    </source>
</evidence>
<evidence type="ECO:0000269" key="6">
    <source>
    </source>
</evidence>
<evidence type="ECO:0000269" key="7">
    <source>
    </source>
</evidence>
<evidence type="ECO:0000269" key="8">
    <source>
    </source>
</evidence>
<evidence type="ECO:0000269" key="9">
    <source>
    </source>
</evidence>
<evidence type="ECO:0000269" key="10">
    <source>
    </source>
</evidence>
<evidence type="ECO:0000269" key="11">
    <source>
    </source>
</evidence>
<evidence type="ECO:0000303" key="12">
    <source>
    </source>
</evidence>
<evidence type="ECO:0000303" key="13">
    <source>
    </source>
</evidence>
<evidence type="ECO:0000305" key="14"/>
<evidence type="ECO:0007744" key="15">
    <source>
    </source>
</evidence>
<evidence type="ECO:0007744" key="16">
    <source>
    </source>
</evidence>
<evidence type="ECO:0007829" key="17">
    <source>
        <dbReference type="PDB" id="6ITU"/>
    </source>
</evidence>
<gene>
    <name type="primary">GULP1</name>
    <name type="synonym">CED6</name>
    <name type="synonym">GULP</name>
</gene>
<dbReference type="EMBL" id="AF200715">
    <property type="protein sequence ID" value="AAF08006.1"/>
    <property type="molecule type" value="mRNA"/>
</dbReference>
<dbReference type="EMBL" id="AF191771">
    <property type="protein sequence ID" value="AAF18975.1"/>
    <property type="molecule type" value="mRNA"/>
</dbReference>
<dbReference type="EMBL" id="AK055718">
    <property type="status" value="NOT_ANNOTATED_CDS"/>
    <property type="molecule type" value="mRNA"/>
</dbReference>
<dbReference type="EMBL" id="AK298626">
    <property type="protein sequence ID" value="BAG60802.1"/>
    <property type="molecule type" value="mRNA"/>
</dbReference>
<dbReference type="EMBL" id="AK314498">
    <property type="protein sequence ID" value="BAG37098.1"/>
    <property type="molecule type" value="mRNA"/>
</dbReference>
<dbReference type="EMBL" id="AC092598">
    <property type="protein sequence ID" value="AAX93242.1"/>
    <property type="molecule type" value="Genomic_DNA"/>
</dbReference>
<dbReference type="EMBL" id="AC125490">
    <property type="protein sequence ID" value="AAY24122.1"/>
    <property type="molecule type" value="Genomic_DNA"/>
</dbReference>
<dbReference type="EMBL" id="AC104131">
    <property type="status" value="NOT_ANNOTATED_CDS"/>
    <property type="molecule type" value="Genomic_DNA"/>
</dbReference>
<dbReference type="EMBL" id="AC108493">
    <property type="status" value="NOT_ANNOTATED_CDS"/>
    <property type="molecule type" value="Genomic_DNA"/>
</dbReference>
<dbReference type="EMBL" id="AC133606">
    <property type="status" value="NOT_ANNOTATED_CDS"/>
    <property type="molecule type" value="Genomic_DNA"/>
</dbReference>
<dbReference type="EMBL" id="CH471058">
    <property type="protein sequence ID" value="EAX10913.1"/>
    <property type="molecule type" value="Genomic_DNA"/>
</dbReference>
<dbReference type="EMBL" id="CH471058">
    <property type="protein sequence ID" value="EAX10914.1"/>
    <property type="molecule type" value="Genomic_DNA"/>
</dbReference>
<dbReference type="EMBL" id="CH471058">
    <property type="protein sequence ID" value="EAX10915.1"/>
    <property type="molecule type" value="Genomic_DNA"/>
</dbReference>
<dbReference type="EMBL" id="CH471058">
    <property type="protein sequence ID" value="EAX10917.1"/>
    <property type="molecule type" value="Genomic_DNA"/>
</dbReference>
<dbReference type="EMBL" id="BC001103">
    <property type="protein sequence ID" value="AAH01103.1"/>
    <property type="molecule type" value="mRNA"/>
</dbReference>
<dbReference type="CCDS" id="CCDS2295.1">
    <molecule id="Q9UBP9-1"/>
</dbReference>
<dbReference type="CCDS" id="CCDS58742.1">
    <molecule id="Q9UBP9-4"/>
</dbReference>
<dbReference type="CCDS" id="CCDS58743.1">
    <molecule id="Q9UBP9-3"/>
</dbReference>
<dbReference type="RefSeq" id="NP_001239597.1">
    <molecule id="Q9UBP9-4"/>
    <property type="nucleotide sequence ID" value="NM_001252668.2"/>
</dbReference>
<dbReference type="RefSeq" id="NP_001239598.1">
    <molecule id="Q9UBP9-3"/>
    <property type="nucleotide sequence ID" value="NM_001252669.2"/>
</dbReference>
<dbReference type="RefSeq" id="NP_001362854.1">
    <molecule id="Q9UBP9-1"/>
    <property type="nucleotide sequence ID" value="NM_001375925.1"/>
</dbReference>
<dbReference type="RefSeq" id="NP_001362855.1">
    <molecule id="Q9UBP9-1"/>
    <property type="nucleotide sequence ID" value="NM_001375926.1"/>
</dbReference>
<dbReference type="RefSeq" id="NP_001362856.1">
    <molecule id="Q9UBP9-1"/>
    <property type="nucleotide sequence ID" value="NM_001375927.1"/>
</dbReference>
<dbReference type="RefSeq" id="NP_001362857.1">
    <molecule id="Q9UBP9-1"/>
    <property type="nucleotide sequence ID" value="NM_001375928.1"/>
</dbReference>
<dbReference type="RefSeq" id="NP_001362858.1">
    <molecule id="Q9UBP9-1"/>
    <property type="nucleotide sequence ID" value="NM_001375929.1"/>
</dbReference>
<dbReference type="RefSeq" id="NP_001362859.1">
    <molecule id="Q9UBP9-1"/>
    <property type="nucleotide sequence ID" value="NM_001375930.1"/>
</dbReference>
<dbReference type="RefSeq" id="NP_001362860.1">
    <molecule id="Q9UBP9-1"/>
    <property type="nucleotide sequence ID" value="NM_001375931.1"/>
</dbReference>
<dbReference type="RefSeq" id="NP_057399.1">
    <molecule id="Q9UBP9-1"/>
    <property type="nucleotide sequence ID" value="NM_016315.4"/>
</dbReference>
<dbReference type="RefSeq" id="XP_016859795.1">
    <property type="nucleotide sequence ID" value="XM_017004306.1"/>
</dbReference>
<dbReference type="RefSeq" id="XP_047300658.1">
    <molecule id="Q9UBP9-1"/>
    <property type="nucleotide sequence ID" value="XM_047444702.1"/>
</dbReference>
<dbReference type="RefSeq" id="XP_054198463.1">
    <molecule id="Q9UBP9-1"/>
    <property type="nucleotide sequence ID" value="XM_054342488.1"/>
</dbReference>
<dbReference type="RefSeq" id="XP_054198464.1">
    <molecule id="Q9UBP9-1"/>
    <property type="nucleotide sequence ID" value="XM_054342489.1"/>
</dbReference>
<dbReference type="PDB" id="6ITU">
    <property type="method" value="X-ray"/>
    <property type="resolution" value="2.17 A"/>
    <property type="chains" value="A=1-168"/>
</dbReference>
<dbReference type="PDBsum" id="6ITU"/>
<dbReference type="SMR" id="Q9UBP9"/>
<dbReference type="BioGRID" id="119550">
    <property type="interactions" value="66"/>
</dbReference>
<dbReference type="ELM" id="Q9UBP9"/>
<dbReference type="FunCoup" id="Q9UBP9">
    <property type="interactions" value="477"/>
</dbReference>
<dbReference type="IntAct" id="Q9UBP9">
    <property type="interactions" value="29"/>
</dbReference>
<dbReference type="MINT" id="Q9UBP9"/>
<dbReference type="STRING" id="9606.ENSP00000386289"/>
<dbReference type="TCDB" id="8.A.238.1.3">
    <property type="family name" value="the cell permeabiity peptide (cpp) family"/>
</dbReference>
<dbReference type="GlyGen" id="Q9UBP9">
    <property type="glycosylation" value="1 site, 1 O-linked glycan (1 site)"/>
</dbReference>
<dbReference type="iPTMnet" id="Q9UBP9"/>
<dbReference type="PhosphoSitePlus" id="Q9UBP9"/>
<dbReference type="BioMuta" id="GULP1"/>
<dbReference type="DMDM" id="74720076"/>
<dbReference type="jPOST" id="Q9UBP9"/>
<dbReference type="MassIVE" id="Q9UBP9"/>
<dbReference type="PaxDb" id="9606-ENSP00000386289"/>
<dbReference type="PeptideAtlas" id="Q9UBP9"/>
<dbReference type="ProteomicsDB" id="19167"/>
<dbReference type="ProteomicsDB" id="7320"/>
<dbReference type="ProteomicsDB" id="84028">
    <molecule id="Q9UBP9-1"/>
</dbReference>
<dbReference type="ProteomicsDB" id="84029">
    <molecule id="Q9UBP9-2"/>
</dbReference>
<dbReference type="Pumba" id="Q9UBP9"/>
<dbReference type="Antibodypedia" id="19788">
    <property type="antibodies" value="188 antibodies from 31 providers"/>
</dbReference>
<dbReference type="DNASU" id="51454"/>
<dbReference type="Ensembl" id="ENST00000359135.7">
    <molecule id="Q9UBP9-1"/>
    <property type="protein sequence ID" value="ENSP00000352047.3"/>
    <property type="gene ID" value="ENSG00000144366.17"/>
</dbReference>
<dbReference type="Ensembl" id="ENST00000409580.5">
    <molecule id="Q9UBP9-1"/>
    <property type="protein sequence ID" value="ENSP00000386289.1"/>
    <property type="gene ID" value="ENSG00000144366.17"/>
</dbReference>
<dbReference type="Ensembl" id="ENST00000409609.5">
    <molecule id="Q9UBP9-1"/>
    <property type="protein sequence ID" value="ENSP00000386867.1"/>
    <property type="gene ID" value="ENSG00000144366.17"/>
</dbReference>
<dbReference type="Ensembl" id="ENST00000409637.7">
    <molecule id="Q9UBP9-2"/>
    <property type="protein sequence ID" value="ENSP00000386402.3"/>
    <property type="gene ID" value="ENSG00000144366.17"/>
</dbReference>
<dbReference type="Ensembl" id="ENST00000409805.5">
    <molecule id="Q9UBP9-3"/>
    <property type="protein sequence ID" value="ENSP00000387171.1"/>
    <property type="gene ID" value="ENSG00000144366.17"/>
</dbReference>
<dbReference type="Ensembl" id="ENST00000409830.6">
    <molecule id="Q9UBP9-1"/>
    <property type="protein sequence ID" value="ENSP00000386732.1"/>
    <property type="gene ID" value="ENSG00000144366.17"/>
</dbReference>
<dbReference type="Ensembl" id="ENST00000409843.5">
    <molecule id="Q9UBP9-4"/>
    <property type="protein sequence ID" value="ENSP00000387144.1"/>
    <property type="gene ID" value="ENSG00000144366.17"/>
</dbReference>
<dbReference type="Ensembl" id="ENST00000410051.5">
    <molecule id="Q9UBP9-2"/>
    <property type="protein sequence ID" value="ENSP00000387013.1"/>
    <property type="gene ID" value="ENSG00000144366.17"/>
</dbReference>
<dbReference type="GeneID" id="51454"/>
<dbReference type="KEGG" id="hsa:51454"/>
<dbReference type="MANE-Select" id="ENST00000409830.6">
    <property type="protein sequence ID" value="ENSP00000386732.1"/>
    <property type="RefSeq nucleotide sequence ID" value="NM_016315.4"/>
    <property type="RefSeq protein sequence ID" value="NP_057399.1"/>
</dbReference>
<dbReference type="UCSC" id="uc002uqc.5">
    <molecule id="Q9UBP9-1"/>
    <property type="organism name" value="human"/>
</dbReference>
<dbReference type="AGR" id="HGNC:18649"/>
<dbReference type="CTD" id="51454"/>
<dbReference type="DisGeNET" id="51454"/>
<dbReference type="GeneCards" id="GULP1"/>
<dbReference type="HGNC" id="HGNC:18649">
    <property type="gene designation" value="GULP1"/>
</dbReference>
<dbReference type="HPA" id="ENSG00000144366">
    <property type="expression patterns" value="Tissue enhanced (epididymis)"/>
</dbReference>
<dbReference type="MIM" id="608165">
    <property type="type" value="gene"/>
</dbReference>
<dbReference type="neXtProt" id="NX_Q9UBP9"/>
<dbReference type="OpenTargets" id="ENSG00000144366"/>
<dbReference type="PharmGKB" id="PA134993283"/>
<dbReference type="VEuPathDB" id="HostDB:ENSG00000144366"/>
<dbReference type="eggNOG" id="KOG3536">
    <property type="taxonomic scope" value="Eukaryota"/>
</dbReference>
<dbReference type="GeneTree" id="ENSGT00940000156186"/>
<dbReference type="HOGENOM" id="CLU_024530_0_0_1"/>
<dbReference type="InParanoid" id="Q9UBP9"/>
<dbReference type="OMA" id="XFARHIK"/>
<dbReference type="OrthoDB" id="10057585at2759"/>
<dbReference type="PAN-GO" id="Q9UBP9">
    <property type="GO annotations" value="0 GO annotations based on evolutionary models"/>
</dbReference>
<dbReference type="PhylomeDB" id="Q9UBP9"/>
<dbReference type="TreeFam" id="TF314159"/>
<dbReference type="PathwayCommons" id="Q9UBP9"/>
<dbReference type="SignaLink" id="Q9UBP9"/>
<dbReference type="BioGRID-ORCS" id="51454">
    <property type="hits" value="14 hits in 1155 CRISPR screens"/>
</dbReference>
<dbReference type="ChiTaRS" id="GULP1">
    <property type="organism name" value="human"/>
</dbReference>
<dbReference type="GenomeRNAi" id="51454"/>
<dbReference type="Pharos" id="Q9UBP9">
    <property type="development level" value="Tbio"/>
</dbReference>
<dbReference type="PRO" id="PR:Q9UBP9"/>
<dbReference type="Proteomes" id="UP000005640">
    <property type="component" value="Chromosome 2"/>
</dbReference>
<dbReference type="RNAct" id="Q9UBP9">
    <property type="molecule type" value="protein"/>
</dbReference>
<dbReference type="Bgee" id="ENSG00000144366">
    <property type="expression patterns" value="Expressed in corpus epididymis and 205 other cell types or tissues"/>
</dbReference>
<dbReference type="ExpressionAtlas" id="Q9UBP9">
    <property type="expression patterns" value="baseline and differential"/>
</dbReference>
<dbReference type="GO" id="GO:0005737">
    <property type="term" value="C:cytoplasm"/>
    <property type="evidence" value="ECO:0007669"/>
    <property type="project" value="UniProtKB-SubCell"/>
</dbReference>
<dbReference type="GO" id="GO:0006915">
    <property type="term" value="P:apoptotic process"/>
    <property type="evidence" value="ECO:0000304"/>
    <property type="project" value="ProtInc"/>
</dbReference>
<dbReference type="GO" id="GO:0006869">
    <property type="term" value="P:lipid transport"/>
    <property type="evidence" value="ECO:0007669"/>
    <property type="project" value="UniProtKB-KW"/>
</dbReference>
<dbReference type="GO" id="GO:0006911">
    <property type="term" value="P:phagocytosis, engulfment"/>
    <property type="evidence" value="ECO:0000314"/>
    <property type="project" value="MGI"/>
</dbReference>
<dbReference type="CDD" id="cd14686">
    <property type="entry name" value="bZIP"/>
    <property type="match status" value="1"/>
</dbReference>
<dbReference type="CDD" id="cd01273">
    <property type="entry name" value="PTB_CED-6"/>
    <property type="match status" value="1"/>
</dbReference>
<dbReference type="FunFam" id="2.30.29.30:FF:000118">
    <property type="entry name" value="GULP PTB domain containing engulfment adaptor 1"/>
    <property type="match status" value="1"/>
</dbReference>
<dbReference type="Gene3D" id="2.30.29.30">
    <property type="entry name" value="Pleckstrin-homology domain (PH domain)/Phosphotyrosine-binding domain (PTB)"/>
    <property type="match status" value="1"/>
</dbReference>
<dbReference type="InterPro" id="IPR051133">
    <property type="entry name" value="Adapter_Engulfment-Domain"/>
</dbReference>
<dbReference type="InterPro" id="IPR011993">
    <property type="entry name" value="PH-like_dom_sf"/>
</dbReference>
<dbReference type="InterPro" id="IPR006020">
    <property type="entry name" value="PTB/PI_dom"/>
</dbReference>
<dbReference type="PANTHER" id="PTHR11232">
    <property type="entry name" value="PHOSPHOTYROSINE INTERACTION DOMAIN-CONTAINING FAMILY MEMBER"/>
    <property type="match status" value="1"/>
</dbReference>
<dbReference type="PANTHER" id="PTHR11232:SF78">
    <property type="entry name" value="PTB DOMAIN-CONTAINING ENGULFMENT ADAPTER PROTEIN 1"/>
    <property type="match status" value="1"/>
</dbReference>
<dbReference type="Pfam" id="PF00640">
    <property type="entry name" value="PID"/>
    <property type="match status" value="1"/>
</dbReference>
<dbReference type="SMART" id="SM00462">
    <property type="entry name" value="PTB"/>
    <property type="match status" value="1"/>
</dbReference>
<dbReference type="SUPFAM" id="SSF50729">
    <property type="entry name" value="PH domain-like"/>
    <property type="match status" value="1"/>
</dbReference>
<dbReference type="PROSITE" id="PS01179">
    <property type="entry name" value="PID"/>
    <property type="match status" value="1"/>
</dbReference>
<comment type="function">
    <text evidence="4 5 7 9">May function as an adapter protein. Required for efficient phagocytosis of apoptotic cells. Modulates cellular glycosphingolipid and cholesterol transport. May play a role in the internalization and endosomal trafficking of various LRP1 ligands, such as PSAP. Increases cellular levels of GTP-bound ARF6.</text>
</comment>
<comment type="subunit">
    <text evidence="6 8 9 10 11">Homodimer. Interacts with clathrin. Interacts with GDP-bound ARF6, but not with GTP-bound ARF6. Part of a complex composed of GULP1, ACAP1 and ARF6. Interacts with ACAP1, LRP1, MEGF10 and STAB2.</text>
</comment>
<comment type="subcellular location">
    <subcellularLocation>
        <location evidence="7">Cytoplasm</location>
    </subcellularLocation>
    <text>May associate with the cytoplasmic side of the plasma membrane and early endosomes.</text>
</comment>
<comment type="alternative products">
    <event type="alternative splicing"/>
    <isoform>
        <id>Q9UBP9-1</id>
        <name>1</name>
        <sequence type="displayed"/>
    </isoform>
    <isoform>
        <id>Q9UBP9-2</id>
        <name>2</name>
        <sequence type="described" ref="VSP_027250 VSP_027251"/>
    </isoform>
    <isoform>
        <id>Q9UBP9-3</id>
        <name>3</name>
        <sequence type="described" ref="VSP_044703"/>
    </isoform>
    <isoform>
        <id>Q9UBP9-4</id>
        <name>4</name>
        <sequence type="described" ref="VSP_045540"/>
    </isoform>
</comment>
<comment type="tissue specificity">
    <text evidence="4">Widely expressed. Detected in macrophages, pancreas, kidney, skeletal muscle, heart, colon, intestine, lung, placenta and ovary.</text>
</comment>
<comment type="similarity">
    <text evidence="14">Belongs to the ced-6 family.</text>
</comment>
<proteinExistence type="evidence at protein level"/>
<organism>
    <name type="scientific">Homo sapiens</name>
    <name type="common">Human</name>
    <dbReference type="NCBI Taxonomy" id="9606"/>
    <lineage>
        <taxon>Eukaryota</taxon>
        <taxon>Metazoa</taxon>
        <taxon>Chordata</taxon>
        <taxon>Craniata</taxon>
        <taxon>Vertebrata</taxon>
        <taxon>Euteleostomi</taxon>
        <taxon>Mammalia</taxon>
        <taxon>Eutheria</taxon>
        <taxon>Euarchontoglires</taxon>
        <taxon>Primates</taxon>
        <taxon>Haplorrhini</taxon>
        <taxon>Catarrhini</taxon>
        <taxon>Hominidae</taxon>
        <taxon>Homo</taxon>
    </lineage>
</organism>
<feature type="chain" id="PRO_0000296679" description="PTB domain-containing engulfment adapter protein 1">
    <location>
        <begin position="1"/>
        <end position="304"/>
    </location>
</feature>
<feature type="domain" description="PID" evidence="2">
    <location>
        <begin position="21"/>
        <end position="176"/>
    </location>
</feature>
<feature type="region of interest" description="Disordered" evidence="3">
    <location>
        <begin position="223"/>
        <end position="246"/>
    </location>
</feature>
<feature type="coiled-coil region" evidence="1">
    <location>
        <begin position="158"/>
        <end position="202"/>
    </location>
</feature>
<feature type="compositionally biased region" description="Polar residues" evidence="3">
    <location>
        <begin position="225"/>
        <end position="237"/>
    </location>
</feature>
<feature type="modified residue" description="Phosphothreonine" evidence="16">
    <location>
        <position position="16"/>
    </location>
</feature>
<feature type="modified residue" description="Phosphoserine" evidence="15">
    <location>
        <position position="223"/>
    </location>
</feature>
<feature type="splice variant" id="VSP_044703" description="In isoform 3." evidence="12">
    <location>
        <begin position="31"/>
        <end position="133"/>
    </location>
</feature>
<feature type="splice variant" id="VSP_027250" description="In isoform 2." evidence="13">
    <original>AEEITLTIGQAFDLAYRKFLESGGKDVETRKQIA</original>
    <variation>VSIPDVVGWFVLFYKPGIVLLLALAKYLKMNNFL</variation>
    <location>
        <begin position="134"/>
        <end position="167"/>
    </location>
</feature>
<feature type="splice variant" id="VSP_027251" description="In isoform 2." evidence="13">
    <location>
        <begin position="168"/>
        <end position="304"/>
    </location>
</feature>
<feature type="splice variant" id="VSP_045540" description="In isoform 4." evidence="12">
    <original>EGFKMGLTLEGTVFCLDPLDSRC</original>
    <variation>RQRWRGSKWD</variation>
    <location>
        <begin position="282"/>
        <end position="304"/>
    </location>
</feature>
<feature type="mutagenesis site" description="Loss of dimerization; when associated with P-183." evidence="6">
    <original>L</original>
    <variation>P</variation>
    <location>
        <position position="176"/>
    </location>
</feature>
<feature type="mutagenesis site" description="Loss of dimerization; when associated with P-176." evidence="6">
    <original>L</original>
    <variation>P</variation>
    <location>
        <position position="183"/>
    </location>
</feature>
<feature type="sequence conflict" description="In Ref. 3; BAG60802." evidence="14" ref="3">
    <original>G</original>
    <variation>S</variation>
    <location>
        <position position="292"/>
    </location>
</feature>
<feature type="helix" evidence="17">
    <location>
        <begin position="17"/>
        <end position="22"/>
    </location>
</feature>
<feature type="strand" evidence="17">
    <location>
        <begin position="25"/>
        <end position="40"/>
    </location>
</feature>
<feature type="helix" evidence="17">
    <location>
        <begin position="43"/>
        <end position="62"/>
    </location>
</feature>
<feature type="strand" evidence="17">
    <location>
        <begin position="69"/>
        <end position="75"/>
    </location>
</feature>
<feature type="strand" evidence="17">
    <location>
        <begin position="78"/>
        <end position="83"/>
    </location>
</feature>
<feature type="turn" evidence="17">
    <location>
        <begin position="84"/>
        <end position="87"/>
    </location>
</feature>
<feature type="strand" evidence="17">
    <location>
        <begin position="88"/>
        <end position="94"/>
    </location>
</feature>
<feature type="helix" evidence="17">
    <location>
        <begin position="95"/>
        <end position="97"/>
    </location>
</feature>
<feature type="strand" evidence="17">
    <location>
        <begin position="98"/>
        <end position="103"/>
    </location>
</feature>
<feature type="strand" evidence="17">
    <location>
        <begin position="110"/>
        <end position="116"/>
    </location>
</feature>
<feature type="turn" evidence="17">
    <location>
        <begin position="118"/>
        <end position="120"/>
    </location>
</feature>
<feature type="strand" evidence="17">
    <location>
        <begin position="123"/>
        <end position="129"/>
    </location>
</feature>
<feature type="turn" evidence="17">
    <location>
        <begin position="131"/>
        <end position="133"/>
    </location>
</feature>
<feature type="helix" evidence="17">
    <location>
        <begin position="134"/>
        <end position="154"/>
    </location>
</feature>
<feature type="turn" evidence="17">
    <location>
        <begin position="155"/>
        <end position="157"/>
    </location>
</feature>
<sequence>MNRAFSRKKDKTWMHTPEALSKHFIPYNAKFLGSTEVEQPKGTEVVRDAVRKLKFARHIKKSEGQKIPKVELQISIYGVKILEPKTKEVQHNCQLHRISFCADDKTDKRIFTFICKDSESNKHLCYVFDSEKCAEEITLTIGQAFDLAYRKFLESGGKDVETRKQIAGLQKRIQDLETENMELKNKVQDLENQLRITQVSAPPAGSMTPKSPSTDIFDMIPFSPISHQSSMPTRNGTQPPPVPSRSTEIKRDLFGAEPFDPFNCGAADFPPDIQSKLDEMQEGFKMGLTLEGTVFCLDPLDSRC</sequence>
<reference key="1">
    <citation type="journal article" date="1999" name="Curr. Biol.">
        <title>Human CED-6 encodes a functional homologue of the Caenorhabditis elegans engulfment protein CED-6.</title>
        <authorList>
            <person name="Liu Q.A."/>
            <person name="Hengartner M.O."/>
        </authorList>
    </citation>
    <scope>NUCLEOTIDE SEQUENCE [MRNA] (ISOFORM 1)</scope>
    <scope>FUNCTION</scope>
</reference>
<reference key="2">
    <citation type="journal article" date="1999" name="Curr. Biol.">
        <title>The human homologue of Caenorhabditis elegans CED-6 specifically promotes phagocytosis of apoptotic cells.</title>
        <authorList>
            <person name="Smits E."/>
            <person name="Van Criekinge W."/>
            <person name="Plaetinck G."/>
            <person name="Bogaert T."/>
        </authorList>
    </citation>
    <scope>NUCLEOTIDE SEQUENCE [MRNA] (ISOFORM 1)</scope>
    <scope>FUNCTION</scope>
    <scope>TISSUE SPECIFICITY</scope>
</reference>
<reference key="3">
    <citation type="journal article" date="2004" name="Nat. Genet.">
        <title>Complete sequencing and characterization of 21,243 full-length human cDNAs.</title>
        <authorList>
            <person name="Ota T."/>
            <person name="Suzuki Y."/>
            <person name="Nishikawa T."/>
            <person name="Otsuki T."/>
            <person name="Sugiyama T."/>
            <person name="Irie R."/>
            <person name="Wakamatsu A."/>
            <person name="Hayashi K."/>
            <person name="Sato H."/>
            <person name="Nagai K."/>
            <person name="Kimura K."/>
            <person name="Makita H."/>
            <person name="Sekine M."/>
            <person name="Obayashi M."/>
            <person name="Nishi T."/>
            <person name="Shibahara T."/>
            <person name="Tanaka T."/>
            <person name="Ishii S."/>
            <person name="Yamamoto J."/>
            <person name="Saito K."/>
            <person name="Kawai Y."/>
            <person name="Isono Y."/>
            <person name="Nakamura Y."/>
            <person name="Nagahari K."/>
            <person name="Murakami K."/>
            <person name="Yasuda T."/>
            <person name="Iwayanagi T."/>
            <person name="Wagatsuma M."/>
            <person name="Shiratori A."/>
            <person name="Sudo H."/>
            <person name="Hosoiri T."/>
            <person name="Kaku Y."/>
            <person name="Kodaira H."/>
            <person name="Kondo H."/>
            <person name="Sugawara M."/>
            <person name="Takahashi M."/>
            <person name="Kanda K."/>
            <person name="Yokoi T."/>
            <person name="Furuya T."/>
            <person name="Kikkawa E."/>
            <person name="Omura Y."/>
            <person name="Abe K."/>
            <person name="Kamihara K."/>
            <person name="Katsuta N."/>
            <person name="Sato K."/>
            <person name="Tanikawa M."/>
            <person name="Yamazaki M."/>
            <person name="Ninomiya K."/>
            <person name="Ishibashi T."/>
            <person name="Yamashita H."/>
            <person name="Murakawa K."/>
            <person name="Fujimori K."/>
            <person name="Tanai H."/>
            <person name="Kimata M."/>
            <person name="Watanabe M."/>
            <person name="Hiraoka S."/>
            <person name="Chiba Y."/>
            <person name="Ishida S."/>
            <person name="Ono Y."/>
            <person name="Takiguchi S."/>
            <person name="Watanabe S."/>
            <person name="Yosida M."/>
            <person name="Hotuta T."/>
            <person name="Kusano J."/>
            <person name="Kanehori K."/>
            <person name="Takahashi-Fujii A."/>
            <person name="Hara H."/>
            <person name="Tanase T.-O."/>
            <person name="Nomura Y."/>
            <person name="Togiya S."/>
            <person name="Komai F."/>
            <person name="Hara R."/>
            <person name="Takeuchi K."/>
            <person name="Arita M."/>
            <person name="Imose N."/>
            <person name="Musashino K."/>
            <person name="Yuuki H."/>
            <person name="Oshima A."/>
            <person name="Sasaki N."/>
            <person name="Aotsuka S."/>
            <person name="Yoshikawa Y."/>
            <person name="Matsunawa H."/>
            <person name="Ichihara T."/>
            <person name="Shiohata N."/>
            <person name="Sano S."/>
            <person name="Moriya S."/>
            <person name="Momiyama H."/>
            <person name="Satoh N."/>
            <person name="Takami S."/>
            <person name="Terashima Y."/>
            <person name="Suzuki O."/>
            <person name="Nakagawa S."/>
            <person name="Senoh A."/>
            <person name="Mizoguchi H."/>
            <person name="Goto Y."/>
            <person name="Shimizu F."/>
            <person name="Wakebe H."/>
            <person name="Hishigaki H."/>
            <person name="Watanabe T."/>
            <person name="Sugiyama A."/>
            <person name="Takemoto M."/>
            <person name="Kawakami B."/>
            <person name="Yamazaki M."/>
            <person name="Watanabe K."/>
            <person name="Kumagai A."/>
            <person name="Itakura S."/>
            <person name="Fukuzumi Y."/>
            <person name="Fujimori Y."/>
            <person name="Komiyama M."/>
            <person name="Tashiro H."/>
            <person name="Tanigami A."/>
            <person name="Fujiwara T."/>
            <person name="Ono T."/>
            <person name="Yamada K."/>
            <person name="Fujii Y."/>
            <person name="Ozaki K."/>
            <person name="Hirao M."/>
            <person name="Ohmori Y."/>
            <person name="Kawabata A."/>
            <person name="Hikiji T."/>
            <person name="Kobatake N."/>
            <person name="Inagaki H."/>
            <person name="Ikema Y."/>
            <person name="Okamoto S."/>
            <person name="Okitani R."/>
            <person name="Kawakami T."/>
            <person name="Noguchi S."/>
            <person name="Itoh T."/>
            <person name="Shigeta K."/>
            <person name="Senba T."/>
            <person name="Matsumura K."/>
            <person name="Nakajima Y."/>
            <person name="Mizuno T."/>
            <person name="Morinaga M."/>
            <person name="Sasaki M."/>
            <person name="Togashi T."/>
            <person name="Oyama M."/>
            <person name="Hata H."/>
            <person name="Watanabe M."/>
            <person name="Komatsu T."/>
            <person name="Mizushima-Sugano J."/>
            <person name="Satoh T."/>
            <person name="Shirai Y."/>
            <person name="Takahashi Y."/>
            <person name="Nakagawa K."/>
            <person name="Okumura K."/>
            <person name="Nagase T."/>
            <person name="Nomura N."/>
            <person name="Kikuchi H."/>
            <person name="Masuho Y."/>
            <person name="Yamashita R."/>
            <person name="Nakai K."/>
            <person name="Yada T."/>
            <person name="Nakamura Y."/>
            <person name="Ohara O."/>
            <person name="Isogai T."/>
            <person name="Sugano S."/>
        </authorList>
    </citation>
    <scope>NUCLEOTIDE SEQUENCE [LARGE SCALE MRNA] (ISOFORMS 1; 3 AND 4)</scope>
    <source>
        <tissue>Neuroblastoma</tissue>
        <tissue>Trachea</tissue>
    </source>
</reference>
<reference key="4">
    <citation type="journal article" date="2005" name="Nature">
        <title>Generation and annotation of the DNA sequences of human chromosomes 2 and 4.</title>
        <authorList>
            <person name="Hillier L.W."/>
            <person name="Graves T.A."/>
            <person name="Fulton R.S."/>
            <person name="Fulton L.A."/>
            <person name="Pepin K.H."/>
            <person name="Minx P."/>
            <person name="Wagner-McPherson C."/>
            <person name="Layman D."/>
            <person name="Wylie K."/>
            <person name="Sekhon M."/>
            <person name="Becker M.C."/>
            <person name="Fewell G.A."/>
            <person name="Delehaunty K.D."/>
            <person name="Miner T.L."/>
            <person name="Nash W.E."/>
            <person name="Kremitzki C."/>
            <person name="Oddy L."/>
            <person name="Du H."/>
            <person name="Sun H."/>
            <person name="Bradshaw-Cordum H."/>
            <person name="Ali J."/>
            <person name="Carter J."/>
            <person name="Cordes M."/>
            <person name="Harris A."/>
            <person name="Isak A."/>
            <person name="van Brunt A."/>
            <person name="Nguyen C."/>
            <person name="Du F."/>
            <person name="Courtney L."/>
            <person name="Kalicki J."/>
            <person name="Ozersky P."/>
            <person name="Abbott S."/>
            <person name="Armstrong J."/>
            <person name="Belter E.A."/>
            <person name="Caruso L."/>
            <person name="Cedroni M."/>
            <person name="Cotton M."/>
            <person name="Davidson T."/>
            <person name="Desai A."/>
            <person name="Elliott G."/>
            <person name="Erb T."/>
            <person name="Fronick C."/>
            <person name="Gaige T."/>
            <person name="Haakenson W."/>
            <person name="Haglund K."/>
            <person name="Holmes A."/>
            <person name="Harkins R."/>
            <person name="Kim K."/>
            <person name="Kruchowski S.S."/>
            <person name="Strong C.M."/>
            <person name="Grewal N."/>
            <person name="Goyea E."/>
            <person name="Hou S."/>
            <person name="Levy A."/>
            <person name="Martinka S."/>
            <person name="Mead K."/>
            <person name="McLellan M.D."/>
            <person name="Meyer R."/>
            <person name="Randall-Maher J."/>
            <person name="Tomlinson C."/>
            <person name="Dauphin-Kohlberg S."/>
            <person name="Kozlowicz-Reilly A."/>
            <person name="Shah N."/>
            <person name="Swearengen-Shahid S."/>
            <person name="Snider J."/>
            <person name="Strong J.T."/>
            <person name="Thompson J."/>
            <person name="Yoakum M."/>
            <person name="Leonard S."/>
            <person name="Pearman C."/>
            <person name="Trani L."/>
            <person name="Radionenko M."/>
            <person name="Waligorski J.E."/>
            <person name="Wang C."/>
            <person name="Rock S.M."/>
            <person name="Tin-Wollam A.-M."/>
            <person name="Maupin R."/>
            <person name="Latreille P."/>
            <person name="Wendl M.C."/>
            <person name="Yang S.-P."/>
            <person name="Pohl C."/>
            <person name="Wallis J.W."/>
            <person name="Spieth J."/>
            <person name="Bieri T.A."/>
            <person name="Berkowicz N."/>
            <person name="Nelson J.O."/>
            <person name="Osborne J."/>
            <person name="Ding L."/>
            <person name="Meyer R."/>
            <person name="Sabo A."/>
            <person name="Shotland Y."/>
            <person name="Sinha P."/>
            <person name="Wohldmann P.E."/>
            <person name="Cook L.L."/>
            <person name="Hickenbotham M.T."/>
            <person name="Eldred J."/>
            <person name="Williams D."/>
            <person name="Jones T.A."/>
            <person name="She X."/>
            <person name="Ciccarelli F.D."/>
            <person name="Izaurralde E."/>
            <person name="Taylor J."/>
            <person name="Schmutz J."/>
            <person name="Myers R.M."/>
            <person name="Cox D.R."/>
            <person name="Huang X."/>
            <person name="McPherson J.D."/>
            <person name="Mardis E.R."/>
            <person name="Clifton S.W."/>
            <person name="Warren W.C."/>
            <person name="Chinwalla A.T."/>
            <person name="Eddy S.R."/>
            <person name="Marra M.A."/>
            <person name="Ovcharenko I."/>
            <person name="Furey T.S."/>
            <person name="Miller W."/>
            <person name="Eichler E.E."/>
            <person name="Bork P."/>
            <person name="Suyama M."/>
            <person name="Torrents D."/>
            <person name="Waterston R.H."/>
            <person name="Wilson R.K."/>
        </authorList>
    </citation>
    <scope>NUCLEOTIDE SEQUENCE [LARGE SCALE GENOMIC DNA]</scope>
</reference>
<reference key="5">
    <citation type="submission" date="2005-09" db="EMBL/GenBank/DDBJ databases">
        <authorList>
            <person name="Mural R.J."/>
            <person name="Istrail S."/>
            <person name="Sutton G.G."/>
            <person name="Florea L."/>
            <person name="Halpern A.L."/>
            <person name="Mobarry C.M."/>
            <person name="Lippert R."/>
            <person name="Walenz B."/>
            <person name="Shatkay H."/>
            <person name="Dew I."/>
            <person name="Miller J.R."/>
            <person name="Flanigan M.J."/>
            <person name="Edwards N.J."/>
            <person name="Bolanos R."/>
            <person name="Fasulo D."/>
            <person name="Halldorsson B.V."/>
            <person name="Hannenhalli S."/>
            <person name="Turner R."/>
            <person name="Yooseph S."/>
            <person name="Lu F."/>
            <person name="Nusskern D.R."/>
            <person name="Shue B.C."/>
            <person name="Zheng X.H."/>
            <person name="Zhong F."/>
            <person name="Delcher A.L."/>
            <person name="Huson D.H."/>
            <person name="Kravitz S.A."/>
            <person name="Mouchard L."/>
            <person name="Reinert K."/>
            <person name="Remington K.A."/>
            <person name="Clark A.G."/>
            <person name="Waterman M.S."/>
            <person name="Eichler E.E."/>
            <person name="Adams M.D."/>
            <person name="Hunkapiller M.W."/>
            <person name="Myers E.W."/>
            <person name="Venter J.C."/>
        </authorList>
    </citation>
    <scope>NUCLEOTIDE SEQUENCE [LARGE SCALE GENOMIC DNA]</scope>
</reference>
<reference key="6">
    <citation type="journal article" date="2004" name="Genome Res.">
        <title>The status, quality, and expansion of the NIH full-length cDNA project: the Mammalian Gene Collection (MGC).</title>
        <authorList>
            <consortium name="The MGC Project Team"/>
        </authorList>
    </citation>
    <scope>NUCLEOTIDE SEQUENCE [LARGE SCALE MRNA] (ISOFORM 2)</scope>
    <source>
        <tissue>Placenta</tissue>
    </source>
</reference>
<reference key="7">
    <citation type="journal article" date="2000" name="J. Biol. Chem.">
        <title>Identification and characterization of a dimerization domain in CED-6, an adapter protein involved in engulfment of apoptotic cells.</title>
        <authorList>
            <person name="Su H.P."/>
            <person name="Brugnera E."/>
            <person name="Van Criekinge W."/>
            <person name="Smits E."/>
            <person name="Hengartner M."/>
            <person name="Bogaert T."/>
            <person name="Ravichandran K.S."/>
        </authorList>
    </citation>
    <scope>SUBUNIT</scope>
    <scope>MUTAGENESIS OF LEU-176 AND LEU-183</scope>
</reference>
<reference key="8">
    <citation type="journal article" date="2006" name="J. Biol. Chem.">
        <title>The lipoprotein receptor-related protein-1 (LRP) adapter protein GULP mediates trafficking of the LRP ligand prosaposin, leading to sphingolipid and free cholesterol accumulation in late endosomes and impaired efflux.</title>
        <authorList>
            <person name="Kiss R.S."/>
            <person name="Ma Z."/>
            <person name="Nakada-Tsukui K."/>
            <person name="Brugnera E."/>
            <person name="Vassiliou G."/>
            <person name="McBride H.M."/>
            <person name="Ravichandran K.S."/>
            <person name="Marcel Y.L."/>
        </authorList>
    </citation>
    <scope>FUNCTION</scope>
    <scope>SUBCELLULAR LOCATION</scope>
</reference>
<reference key="9">
    <citation type="journal article" date="2006" name="PLoS ONE">
        <title>Cooperation between engulfment receptors: the case of ABCA1 and MEGF10.</title>
        <authorList>
            <person name="Hamon Y."/>
            <person name="Trompier D."/>
            <person name="Ma Z."/>
            <person name="Venegas V."/>
            <person name="Pophillat M."/>
            <person name="Mignotte V."/>
            <person name="Zhou Z."/>
            <person name="Chimini G."/>
        </authorList>
    </citation>
    <scope>INTERACTION WITH MEGF10</scope>
</reference>
<reference key="10">
    <citation type="journal article" date="2007" name="Curr. Biol.">
        <title>Regulation of Arf6 and ACAP1 signaling by the PTB-domain-containing adaptor protein GULP.</title>
        <authorList>
            <person name="Ma Z."/>
            <person name="Nie Z."/>
            <person name="Luo R."/>
            <person name="Casanova J.E."/>
            <person name="Ravichandran K.S."/>
        </authorList>
    </citation>
    <scope>FUNCTION</scope>
    <scope>INTERACTION WITH ARF6 AND ACAP1</scope>
    <scope>IDENTIFICATION IN A COMPLEX WITH ACAP1 AND ARF6</scope>
</reference>
<reference key="11">
    <citation type="journal article" date="2007" name="Exp. Cell Res.">
        <title>MEGF10 is a mammalian ortholog of CED-1 that interacts with clathrin assembly protein complex 2 medium chain and induces large vacuole formation.</title>
        <authorList>
            <person name="Suzuki E."/>
            <person name="Nakayama M."/>
        </authorList>
    </citation>
    <scope>INTERACTION WITH MEGF10</scope>
</reference>
<reference key="12">
    <citation type="journal article" date="2008" name="J. Biol. Chem.">
        <title>Requirement of adaptor protein GULP during stabilin-2-mediated cell corpse engulfment.</title>
        <authorList>
            <person name="Park S.Y."/>
            <person name="Kang K.B."/>
            <person name="Thapa N."/>
            <person name="Kim S.Y."/>
            <person name="Lee S.J."/>
            <person name="Kim I.S."/>
        </authorList>
    </citation>
    <scope>INTERACTION WITH STAB2</scope>
</reference>
<reference key="13">
    <citation type="journal article" date="2008" name="J. Proteome Res.">
        <title>Combining protein-based IMAC, peptide-based IMAC, and MudPIT for efficient phosphoproteomic analysis.</title>
        <authorList>
            <person name="Cantin G.T."/>
            <person name="Yi W."/>
            <person name="Lu B."/>
            <person name="Park S.K."/>
            <person name="Xu T."/>
            <person name="Lee J.-D."/>
            <person name="Yates J.R. III"/>
        </authorList>
    </citation>
    <scope>PHOSPHORYLATION [LARGE SCALE ANALYSIS] AT SER-223</scope>
    <scope>IDENTIFICATION BY MASS SPECTROMETRY [LARGE SCALE ANALYSIS]</scope>
    <source>
        <tissue>Cervix carcinoma</tissue>
    </source>
</reference>
<reference key="14">
    <citation type="journal article" date="2011" name="BMC Syst. Biol.">
        <title>Initial characterization of the human central proteome.</title>
        <authorList>
            <person name="Burkard T.R."/>
            <person name="Planyavsky M."/>
            <person name="Kaupe I."/>
            <person name="Breitwieser F.P."/>
            <person name="Buerckstuemmer T."/>
            <person name="Bennett K.L."/>
            <person name="Superti-Furga G."/>
            <person name="Colinge J."/>
        </authorList>
    </citation>
    <scope>IDENTIFICATION BY MASS SPECTROMETRY [LARGE SCALE ANALYSIS]</scope>
</reference>
<reference key="15">
    <citation type="journal article" date="2011" name="Sci. Signal.">
        <title>System-wide temporal characterization of the proteome and phosphoproteome of human embryonic stem cell differentiation.</title>
        <authorList>
            <person name="Rigbolt K.T."/>
            <person name="Prokhorova T.A."/>
            <person name="Akimov V."/>
            <person name="Henningsen J."/>
            <person name="Johansen P.T."/>
            <person name="Kratchmarova I."/>
            <person name="Kassem M."/>
            <person name="Mann M."/>
            <person name="Olsen J.V."/>
            <person name="Blagoev B."/>
        </authorList>
    </citation>
    <scope>IDENTIFICATION BY MASS SPECTROMETRY [LARGE SCALE ANALYSIS]</scope>
</reference>
<reference key="16">
    <citation type="journal article" date="2013" name="J. Proteome Res.">
        <title>Toward a comprehensive characterization of a human cancer cell phosphoproteome.</title>
        <authorList>
            <person name="Zhou H."/>
            <person name="Di Palma S."/>
            <person name="Preisinger C."/>
            <person name="Peng M."/>
            <person name="Polat A.N."/>
            <person name="Heck A.J."/>
            <person name="Mohammed S."/>
        </authorList>
    </citation>
    <scope>PHOSPHORYLATION [LARGE SCALE ANALYSIS] AT THR-16</scope>
    <scope>IDENTIFICATION BY MASS SPECTROMETRY [LARGE SCALE ANALYSIS]</scope>
    <source>
        <tissue>Erythroleukemia</tissue>
    </source>
</reference>
<keyword id="KW-0002">3D-structure</keyword>
<keyword id="KW-0025">Alternative splicing</keyword>
<keyword id="KW-0053">Apoptosis</keyword>
<keyword id="KW-0175">Coiled coil</keyword>
<keyword id="KW-0963">Cytoplasm</keyword>
<keyword id="KW-0445">Lipid transport</keyword>
<keyword id="KW-0581">Phagocytosis</keyword>
<keyword id="KW-0597">Phosphoprotein</keyword>
<keyword id="KW-1267">Proteomics identification</keyword>
<keyword id="KW-1185">Reference proteome</keyword>
<keyword id="KW-0813">Transport</keyword>
<name>GULP1_HUMAN</name>
<accession>Q9UBP9</accession>
<accession>B2RB51</accession>
<accession>B4DQ40</accession>
<accession>B8ZZ72</accession>
<accession>D3DPH1</accession>
<accession>E9PB86</accession>
<accession>Q53PC1</accession>
<accession>Q53RF3</accession>
<accession>Q9BVL3</accession>
<protein>
    <recommendedName>
        <fullName>PTB domain-containing engulfment adapter protein 1</fullName>
    </recommendedName>
    <alternativeName>
        <fullName>Cell death protein 6 homolog</fullName>
    </alternativeName>
    <alternativeName>
        <fullName>PTB domain adapter protein CED-6</fullName>
    </alternativeName>
    <alternativeName>
        <fullName>Protein GULP</fullName>
    </alternativeName>
</protein>